<gene>
    <name type="primary">UTP25</name>
    <name type="ORF">BC1G_03830</name>
    <name type="ORF">BCIN_04g05800</name>
</gene>
<accession>A6RT94</accession>
<accession>A0A384JFP4</accession>
<reference key="1">
    <citation type="journal article" date="2011" name="PLoS Genet.">
        <title>Genomic analysis of the necrotrophic fungal pathogens Sclerotinia sclerotiorum and Botrytis cinerea.</title>
        <authorList>
            <person name="Amselem J."/>
            <person name="Cuomo C.A."/>
            <person name="van Kan J.A.L."/>
            <person name="Viaud M."/>
            <person name="Benito E.P."/>
            <person name="Couloux A."/>
            <person name="Coutinho P.M."/>
            <person name="de Vries R.P."/>
            <person name="Dyer P.S."/>
            <person name="Fillinger S."/>
            <person name="Fournier E."/>
            <person name="Gout L."/>
            <person name="Hahn M."/>
            <person name="Kohn L."/>
            <person name="Lapalu N."/>
            <person name="Plummer K.M."/>
            <person name="Pradier J.-M."/>
            <person name="Quevillon E."/>
            <person name="Sharon A."/>
            <person name="Simon A."/>
            <person name="ten Have A."/>
            <person name="Tudzynski B."/>
            <person name="Tudzynski P."/>
            <person name="Wincker P."/>
            <person name="Andrew M."/>
            <person name="Anthouard V."/>
            <person name="Beever R.E."/>
            <person name="Beffa R."/>
            <person name="Benoit I."/>
            <person name="Bouzid O."/>
            <person name="Brault B."/>
            <person name="Chen Z."/>
            <person name="Choquer M."/>
            <person name="Collemare J."/>
            <person name="Cotton P."/>
            <person name="Danchin E.G."/>
            <person name="Da Silva C."/>
            <person name="Gautier A."/>
            <person name="Giraud C."/>
            <person name="Giraud T."/>
            <person name="Gonzalez C."/>
            <person name="Grossetete S."/>
            <person name="Gueldener U."/>
            <person name="Henrissat B."/>
            <person name="Howlett B.J."/>
            <person name="Kodira C."/>
            <person name="Kretschmer M."/>
            <person name="Lappartient A."/>
            <person name="Leroch M."/>
            <person name="Levis C."/>
            <person name="Mauceli E."/>
            <person name="Neuveglise C."/>
            <person name="Oeser B."/>
            <person name="Pearson M."/>
            <person name="Poulain J."/>
            <person name="Poussereau N."/>
            <person name="Quesneville H."/>
            <person name="Rascle C."/>
            <person name="Schumacher J."/>
            <person name="Segurens B."/>
            <person name="Sexton A."/>
            <person name="Silva E."/>
            <person name="Sirven C."/>
            <person name="Soanes D.M."/>
            <person name="Talbot N.J."/>
            <person name="Templeton M."/>
            <person name="Yandava C."/>
            <person name="Yarden O."/>
            <person name="Zeng Q."/>
            <person name="Rollins J.A."/>
            <person name="Lebrun M.-H."/>
            <person name="Dickman M."/>
        </authorList>
    </citation>
    <scope>NUCLEOTIDE SEQUENCE [LARGE SCALE GENOMIC DNA]</scope>
    <source>
        <strain>B05.10</strain>
    </source>
</reference>
<reference key="2">
    <citation type="journal article" date="2012" name="Eukaryot. Cell">
        <title>Genome update of Botrytis cinerea strains B05.10 and T4.</title>
        <authorList>
            <person name="Staats M."/>
            <person name="van Kan J.A.L."/>
        </authorList>
    </citation>
    <scope>NUCLEOTIDE SEQUENCE [LARGE SCALE GENOMIC DNA]</scope>
    <scope>GENOME REANNOTATION</scope>
    <source>
        <strain>B05.10</strain>
    </source>
</reference>
<reference key="3">
    <citation type="journal article" date="2017" name="Mol. Plant Pathol.">
        <title>A gapless genome sequence of the fungus Botrytis cinerea.</title>
        <authorList>
            <person name="van Kan J.A.L."/>
            <person name="Stassen J.H.M."/>
            <person name="Mosbach A."/>
            <person name="van der Lee T.A.J."/>
            <person name="Faino L."/>
            <person name="Farmer A.D."/>
            <person name="Papasotiriou D.G."/>
            <person name="Zhou S."/>
            <person name="Seidl M.F."/>
            <person name="Cottam E."/>
            <person name="Edel D."/>
            <person name="Hahn M."/>
            <person name="Schwartz D.C."/>
            <person name="Dietrich R.A."/>
            <person name="Widdison S."/>
            <person name="Scalliet G."/>
        </authorList>
    </citation>
    <scope>NUCLEOTIDE SEQUENCE [LARGE SCALE GENOMIC DNA]</scope>
    <scope>GENOME REANNOTATION</scope>
    <source>
        <strain>B05.10</strain>
    </source>
</reference>
<sequence>MAFGQRNTSRGGRGGGGGGSSFRGRGGSRGGPRGRGGMRGGRGRGRGRPVFDSARLAQKEEDEESDSESEEPSQDEASEEESSDDDDDDEPVPAVKSYTALMQSFTRDSAPQAKRRKLNVDKEEKEDEDADLMDEDTNEADLVEEEEEGPETATDGILEDDEEDKADPFEAHFANPDDNILSRRLQHLEKGQWALRMSSLAKVGTAITSIPGDGEPRAMKAMTIGSPEGLKLKQKLANVIKKQRPTFDALEKSIAPLVFGYQDLLFTERNTSNAESLRRLTCLHAVNHVFKTRDRVIKNNSRLAREDSSDDLELRDQGFTRPKVLMLLPTRESCVRMVDMITSLCEPEQQENRKRFNDSFVDKEENYSTDKPEDFRELFAGNDDDMFRLGLKFTRKTIKYFSQFYNSDIIFASPLGLRMAIGDEDAKKVDHDFLSSIEIVIVDQADALLMQNWEHVEFIFDHLNLQPKEAHGCDFSRVRSWYLDNNAKYFRQNIALAGFNTPELQTMFYTQSQNWEGKAKVSSTYPGAIQELGLKVKQTFSRIDTESIASDPQSRFEYFTSAIIPTLTRRSKDSSGTLLFIPSYMDFVKVRNYFSTSATTSSLSFGSISEYTTPKEVARARSHFFSGRHNVLLYTERAHHFRRYQIRGVKKVIMYGIPENPIFYKEIVAGYLGRSVREGDLEPGNGSLRAVFSKWDSMKLERIAGTERVNKMIKEKGDTFDFL</sequence>
<proteinExistence type="inferred from homology"/>
<keyword id="KW-0539">Nucleus</keyword>
<keyword id="KW-1185">Reference proteome</keyword>
<keyword id="KW-0687">Ribonucleoprotein</keyword>
<keyword id="KW-0690">Ribosome biogenesis</keyword>
<keyword id="KW-0698">rRNA processing</keyword>
<organism>
    <name type="scientific">Botryotinia fuckeliana (strain B05.10)</name>
    <name type="common">Noble rot fungus</name>
    <name type="synonym">Botrytis cinerea</name>
    <dbReference type="NCBI Taxonomy" id="332648"/>
    <lineage>
        <taxon>Eukaryota</taxon>
        <taxon>Fungi</taxon>
        <taxon>Dikarya</taxon>
        <taxon>Ascomycota</taxon>
        <taxon>Pezizomycotina</taxon>
        <taxon>Leotiomycetes</taxon>
        <taxon>Helotiales</taxon>
        <taxon>Sclerotiniaceae</taxon>
        <taxon>Botrytis</taxon>
    </lineage>
</organism>
<protein>
    <recommendedName>
        <fullName>U3 small nucleolar RNA-associated protein 25</fullName>
        <shortName>U3 snoRNA-associated protein 25</shortName>
    </recommendedName>
    <alternativeName>
        <fullName>U three protein 25</fullName>
    </alternativeName>
</protein>
<feature type="chain" id="PRO_0000408106" description="U3 small nucleolar RNA-associated protein 25">
    <location>
        <begin position="1"/>
        <end position="723"/>
    </location>
</feature>
<feature type="region of interest" description="Disordered" evidence="2">
    <location>
        <begin position="1"/>
        <end position="159"/>
    </location>
</feature>
<feature type="compositionally biased region" description="Gly residues" evidence="2">
    <location>
        <begin position="11"/>
        <end position="40"/>
    </location>
</feature>
<feature type="compositionally biased region" description="Acidic residues" evidence="2">
    <location>
        <begin position="60"/>
        <end position="91"/>
    </location>
</feature>
<feature type="compositionally biased region" description="Polar residues" evidence="2">
    <location>
        <begin position="100"/>
        <end position="109"/>
    </location>
</feature>
<feature type="compositionally biased region" description="Acidic residues" evidence="2">
    <location>
        <begin position="124"/>
        <end position="150"/>
    </location>
</feature>
<name>UTP25_BOTFB</name>
<evidence type="ECO:0000250" key="1"/>
<evidence type="ECO:0000256" key="2">
    <source>
        <dbReference type="SAM" id="MobiDB-lite"/>
    </source>
</evidence>
<evidence type="ECO:0000305" key="3"/>
<dbReference type="EMBL" id="CP009808">
    <property type="protein sequence ID" value="ATZ49429.1"/>
    <property type="molecule type" value="Genomic_DNA"/>
</dbReference>
<dbReference type="EnsemblFungi" id="Bcin04g05800.1">
    <property type="protein sequence ID" value="Bcin04p05800.1"/>
    <property type="gene ID" value="Bcin04g05800"/>
</dbReference>
<dbReference type="GeneID" id="5438312"/>
<dbReference type="KEGG" id="bfu:BCIN_04g05800"/>
<dbReference type="VEuPathDB" id="FungiDB:Bcin04g05800"/>
<dbReference type="OMA" id="QDRGDTF"/>
<dbReference type="OrthoDB" id="10264378at2759"/>
<dbReference type="Proteomes" id="UP000001798">
    <property type="component" value="Chromosome bcin04"/>
</dbReference>
<dbReference type="GO" id="GO:0005730">
    <property type="term" value="C:nucleolus"/>
    <property type="evidence" value="ECO:0007669"/>
    <property type="project" value="UniProtKB-SubCell"/>
</dbReference>
<dbReference type="GO" id="GO:0032040">
    <property type="term" value="C:small-subunit processome"/>
    <property type="evidence" value="ECO:0007669"/>
    <property type="project" value="EnsemblFungi"/>
</dbReference>
<dbReference type="GO" id="GO:0019843">
    <property type="term" value="F:rRNA binding"/>
    <property type="evidence" value="ECO:0007669"/>
    <property type="project" value="EnsemblFungi"/>
</dbReference>
<dbReference type="GO" id="GO:0034511">
    <property type="term" value="F:U3 snoRNA binding"/>
    <property type="evidence" value="ECO:0007669"/>
    <property type="project" value="EnsemblFungi"/>
</dbReference>
<dbReference type="GO" id="GO:0000462">
    <property type="term" value="P:maturation of SSU-rRNA from tricistronic rRNA transcript (SSU-rRNA, 5.8S rRNA, LSU-rRNA)"/>
    <property type="evidence" value="ECO:0007669"/>
    <property type="project" value="EnsemblFungi"/>
</dbReference>
<dbReference type="FunFam" id="3.40.50.300:FF:002356">
    <property type="entry name" value="U3 small nucleolar RNA-associated protein 25"/>
    <property type="match status" value="1"/>
</dbReference>
<dbReference type="Gene3D" id="3.40.50.300">
    <property type="entry name" value="P-loop containing nucleotide triphosphate hydrolases"/>
    <property type="match status" value="1"/>
</dbReference>
<dbReference type="InterPro" id="IPR027417">
    <property type="entry name" value="P-loop_NTPase"/>
</dbReference>
<dbReference type="InterPro" id="IPR010678">
    <property type="entry name" value="UTP25"/>
</dbReference>
<dbReference type="InterPro" id="IPR053939">
    <property type="entry name" value="UTP25_C"/>
</dbReference>
<dbReference type="InterPro" id="IPR053940">
    <property type="entry name" value="UTP25_NTPase-like"/>
</dbReference>
<dbReference type="PANTHER" id="PTHR12933">
    <property type="entry name" value="ORF PROTEIN-RELATED"/>
    <property type="match status" value="1"/>
</dbReference>
<dbReference type="PANTHER" id="PTHR12933:SF0">
    <property type="entry name" value="U3 SMALL NUCLEOLAR RNA-ASSOCIATED PROTEIN 25 HOMOLOG"/>
    <property type="match status" value="1"/>
</dbReference>
<dbReference type="Pfam" id="PF06862">
    <property type="entry name" value="Utp25_C"/>
    <property type="match status" value="1"/>
</dbReference>
<dbReference type="Pfam" id="PF22916">
    <property type="entry name" value="UTP25_NTPase-like"/>
    <property type="match status" value="1"/>
</dbReference>
<comment type="function">
    <text evidence="1">DEAD-box RNA helicase-like protein required for pre-18S rRNA processing, specifically at sites A0, A1, and A2.</text>
</comment>
<comment type="subunit">
    <text evidence="1">Component of the ribosomal small subunit (SSU) processome composed of at least 40 protein subunits and snoRNA U3.</text>
</comment>
<comment type="subcellular location">
    <subcellularLocation>
        <location evidence="1">Nucleus</location>
        <location evidence="1">Nucleolus</location>
    </subcellularLocation>
</comment>
<comment type="similarity">
    <text evidence="3">Belongs to the UTP25 family.</text>
</comment>